<dbReference type="EC" id="3.4.17.-"/>
<dbReference type="EMBL" id="EU024296">
    <property type="protein sequence ID" value="ABW79918.1"/>
    <property type="molecule type" value="Genomic_DNA"/>
</dbReference>
<dbReference type="EMBL" id="DQ786567">
    <property type="protein sequence ID" value="ABH03555.1"/>
    <property type="molecule type" value="mRNA"/>
</dbReference>
<dbReference type="GlyCosmos" id="A6XHF7">
    <property type="glycosylation" value="3 sites, No reported glycans"/>
</dbReference>
<dbReference type="VEuPathDB" id="FungiDB:TERG_02214"/>
<dbReference type="GO" id="GO:0005576">
    <property type="term" value="C:extracellular region"/>
    <property type="evidence" value="ECO:0007669"/>
    <property type="project" value="UniProtKB-SubCell"/>
</dbReference>
<dbReference type="GO" id="GO:0004181">
    <property type="term" value="F:metallocarboxypeptidase activity"/>
    <property type="evidence" value="ECO:0007669"/>
    <property type="project" value="InterPro"/>
</dbReference>
<dbReference type="GO" id="GO:0008270">
    <property type="term" value="F:zinc ion binding"/>
    <property type="evidence" value="ECO:0007669"/>
    <property type="project" value="InterPro"/>
</dbReference>
<dbReference type="GO" id="GO:0006508">
    <property type="term" value="P:proteolysis"/>
    <property type="evidence" value="ECO:0007669"/>
    <property type="project" value="UniProtKB-KW"/>
</dbReference>
<dbReference type="CDD" id="cd06242">
    <property type="entry name" value="M14-like"/>
    <property type="match status" value="1"/>
</dbReference>
<dbReference type="Gene3D" id="3.40.630.10">
    <property type="entry name" value="Zn peptidases"/>
    <property type="match status" value="1"/>
</dbReference>
<dbReference type="InterPro" id="IPR000834">
    <property type="entry name" value="Peptidase_M14"/>
</dbReference>
<dbReference type="PANTHER" id="PTHR11705:SF83">
    <property type="entry name" value="INACTIVE METALLOCARBOXYPEPTIDASE ECM14"/>
    <property type="match status" value="1"/>
</dbReference>
<dbReference type="PANTHER" id="PTHR11705">
    <property type="entry name" value="PROTEASE FAMILY M14 CARBOXYPEPTIDASE A,B"/>
    <property type="match status" value="1"/>
</dbReference>
<dbReference type="Pfam" id="PF00246">
    <property type="entry name" value="Peptidase_M14"/>
    <property type="match status" value="1"/>
</dbReference>
<dbReference type="SUPFAM" id="SSF53187">
    <property type="entry name" value="Zn-dependent exopeptidases"/>
    <property type="match status" value="1"/>
</dbReference>
<dbReference type="PROSITE" id="PS52035">
    <property type="entry name" value="PEPTIDASE_M14"/>
    <property type="match status" value="1"/>
</dbReference>
<name>MCPB_TRIRU</name>
<feature type="signal peptide" evidence="1">
    <location>
        <begin position="1"/>
        <end position="21"/>
    </location>
</feature>
<feature type="chain" id="PRO_0000384111" description="Carboxypeptidase 2">
    <location>
        <begin position="22"/>
        <end position="538"/>
    </location>
</feature>
<feature type="domain" description="Peptidase M14" evidence="2">
    <location>
        <begin position="71"/>
        <end position="351"/>
    </location>
</feature>
<feature type="region of interest" description="Disordered" evidence="3">
    <location>
        <begin position="53"/>
        <end position="76"/>
    </location>
</feature>
<feature type="active site" description="Proton donor/acceptor" evidence="2">
    <location>
        <position position="322"/>
    </location>
</feature>
<feature type="binding site" evidence="2">
    <location>
        <position position="136"/>
    </location>
    <ligand>
        <name>Zn(2+)</name>
        <dbReference type="ChEBI" id="CHEBI:29105"/>
        <note>catalytic</note>
    </ligand>
</feature>
<feature type="binding site" evidence="2">
    <location>
        <position position="139"/>
    </location>
    <ligand>
        <name>Zn(2+)</name>
        <dbReference type="ChEBI" id="CHEBI:29105"/>
        <note>catalytic</note>
    </ligand>
</feature>
<feature type="binding site" evidence="2">
    <location>
        <position position="224"/>
    </location>
    <ligand>
        <name>Zn(2+)</name>
        <dbReference type="ChEBI" id="CHEBI:29105"/>
        <note>catalytic</note>
    </ligand>
</feature>
<feature type="glycosylation site" description="N-linked (GlcNAc...) asparagine" evidence="1">
    <location>
        <position position="46"/>
    </location>
</feature>
<feature type="glycosylation site" description="N-linked (GlcNAc...) asparagine" evidence="1">
    <location>
        <position position="393"/>
    </location>
</feature>
<feature type="glycosylation site" description="N-linked (GlcNAc...) asparagine" evidence="1">
    <location>
        <position position="459"/>
    </location>
</feature>
<comment type="function">
    <text evidence="4">Extracellular metalloprotease that contributes to pathogenicity.</text>
</comment>
<comment type="cofactor">
    <cofactor evidence="2">
        <name>Zn(2+)</name>
        <dbReference type="ChEBI" id="CHEBI:29105"/>
    </cofactor>
</comment>
<comment type="subcellular location">
    <subcellularLocation>
        <location evidence="4">Secreted</location>
    </subcellularLocation>
</comment>
<comment type="similarity">
    <text evidence="5">Belongs to the peptidase M14 family.</text>
</comment>
<reference key="1">
    <citation type="journal article" date="2008" name="Int. J. Med. Microbiol.">
        <title>Trichophyton rubrum secreted and membrane-associated carboxypeptidases.</title>
        <authorList>
            <person name="Zaugg C."/>
            <person name="Jousson O."/>
            <person name="Lechenne B."/>
            <person name="Staib P."/>
            <person name="Monod M."/>
        </authorList>
    </citation>
    <scope>NUCLEOTIDE SEQUENCE [GENOMIC DNA / MRNA]</scope>
    <scope>SUBCELLULAR LOCATION</scope>
    <scope>FUNCTION</scope>
</reference>
<evidence type="ECO:0000255" key="1"/>
<evidence type="ECO:0000255" key="2">
    <source>
        <dbReference type="PROSITE-ProRule" id="PRU01379"/>
    </source>
</evidence>
<evidence type="ECO:0000256" key="3">
    <source>
        <dbReference type="SAM" id="MobiDB-lite"/>
    </source>
</evidence>
<evidence type="ECO:0000269" key="4">
    <source>
    </source>
</evidence>
<evidence type="ECO:0000305" key="5"/>
<gene>
    <name type="primary">MCPB</name>
    <name type="synonym">CARB2</name>
</gene>
<sequence>MVAYRFLTLISLGLGSHCVSALQYGYNQLSTHKDPAVVAGAFPAINGTHLRSPAFTSPGTVSRGFSDGTSGPTRDETMEGFMRRLARSNSWMAYHEAGFKSEEGRKFPYMYLSASSSSVENPSSRKLRVWLQGGVHGNEPAGDQSMLVLLGDLAANQKWAAKLLEKMDILVLPRYNPDGVFYFQRYLATNFDPNRDHLKLARQQTRDIKELFAKFSPHIATDMHEFTAGRAFGPKKDFIYAADALFSAAKNLNIDEGIRQLSEKLFAKRMGKDIEAAGLRWDPYITLGESSSSKLLLREAGTDAKIGRNAMGLSQCVVFLCETRGIGIADQHFERRTLSGLVMAKSVLQTAVDNFDEVYNTIERGIRRFTNSRNDIVLTDKSPIIERTFGMLNTTDASLFDYPIDFATTTPAEPVLTRSRPRAYLIPPSWPDIVKRLEVFGVKADKLPYSYVGPVEALNVTSVTFDKEFYEGVVTTTVETKLVERSIRLPPGSYLVKTNQKNAALAFVALEPENIDSFASFGIIPVNTGDQYPIFRLK</sequence>
<organism>
    <name type="scientific">Trichophyton rubrum</name>
    <name type="common">Athlete's foot fungus</name>
    <name type="synonym">Epidermophyton rubrum</name>
    <dbReference type="NCBI Taxonomy" id="5551"/>
    <lineage>
        <taxon>Eukaryota</taxon>
        <taxon>Fungi</taxon>
        <taxon>Dikarya</taxon>
        <taxon>Ascomycota</taxon>
        <taxon>Pezizomycotina</taxon>
        <taxon>Eurotiomycetes</taxon>
        <taxon>Eurotiomycetidae</taxon>
        <taxon>Onygenales</taxon>
        <taxon>Arthrodermataceae</taxon>
        <taxon>Trichophyton</taxon>
    </lineage>
</organism>
<keyword id="KW-0121">Carboxypeptidase</keyword>
<keyword id="KW-0325">Glycoprotein</keyword>
<keyword id="KW-0378">Hydrolase</keyword>
<keyword id="KW-0645">Protease</keyword>
<keyword id="KW-0964">Secreted</keyword>
<keyword id="KW-0732">Signal</keyword>
<keyword id="KW-0843">Virulence</keyword>
<protein>
    <recommendedName>
        <fullName>Carboxypeptidase 2</fullName>
        <ecNumber>3.4.17.-</ecNumber>
    </recommendedName>
    <alternativeName>
        <fullName>Carboxypeptidase M14B</fullName>
    </alternativeName>
    <alternativeName>
        <fullName>Carboxypeptidase MCPB</fullName>
    </alternativeName>
</protein>
<accession>A6XHF7</accession>
<proteinExistence type="evidence at transcript level"/>